<evidence type="ECO:0000305" key="1"/>
<dbReference type="EMBL" id="L47648">
    <property type="protein sequence ID" value="AAC83958.1"/>
    <property type="molecule type" value="Genomic_DNA"/>
</dbReference>
<dbReference type="EMBL" id="AL009126">
    <property type="protein sequence ID" value="CAB14208.1"/>
    <property type="molecule type" value="Genomic_DNA"/>
</dbReference>
<dbReference type="EMBL" id="D79978">
    <property type="protein sequence ID" value="BAA11474.1"/>
    <property type="molecule type" value="Genomic_DNA"/>
</dbReference>
<dbReference type="EMBL" id="U11687">
    <property type="protein sequence ID" value="AAA85146.1"/>
    <property type="molecule type" value="Genomic_DNA"/>
</dbReference>
<dbReference type="EMBL" id="M22904">
    <property type="protein sequence ID" value="AAA22820.1"/>
    <property type="status" value="ALT_FRAME"/>
    <property type="molecule type" value="Genomic_DNA"/>
</dbReference>
<dbReference type="PIR" id="E69934">
    <property type="entry name" value="E69934"/>
</dbReference>
<dbReference type="RefSeq" id="WP_003230547.1">
    <property type="nucleotide sequence ID" value="NZ_OZ025638.1"/>
</dbReference>
<dbReference type="SMR" id="P38490"/>
<dbReference type="FunCoup" id="P38490">
    <property type="interactions" value="80"/>
</dbReference>
<dbReference type="STRING" id="224308.BSU22920"/>
<dbReference type="PaxDb" id="224308-BSU22920"/>
<dbReference type="EnsemblBacteria" id="CAB14208">
    <property type="protein sequence ID" value="CAB14208"/>
    <property type="gene ID" value="BSU_22920"/>
</dbReference>
<dbReference type="GeneID" id="938981"/>
<dbReference type="KEGG" id="bsu:BSU22920"/>
<dbReference type="PATRIC" id="fig|224308.179.peg.2499"/>
<dbReference type="eggNOG" id="COG2959">
    <property type="taxonomic scope" value="Bacteria"/>
</dbReference>
<dbReference type="InParanoid" id="P38490"/>
<dbReference type="OrthoDB" id="2372097at2"/>
<dbReference type="BioCyc" id="BSUB:BSU22920-MONOMER"/>
<dbReference type="Proteomes" id="UP000001570">
    <property type="component" value="Chromosome"/>
</dbReference>
<dbReference type="GO" id="GO:0009847">
    <property type="term" value="P:spore germination"/>
    <property type="evidence" value="ECO:0007669"/>
    <property type="project" value="InterPro"/>
</dbReference>
<dbReference type="GO" id="GO:0030435">
    <property type="term" value="P:sporulation resulting in formation of a cellular spore"/>
    <property type="evidence" value="ECO:0007669"/>
    <property type="project" value="UniProtKB-KW"/>
</dbReference>
<dbReference type="InterPro" id="IPR025711">
    <property type="entry name" value="PepSY"/>
</dbReference>
<dbReference type="InterPro" id="IPR048402">
    <property type="entry name" value="YpeB_N"/>
</dbReference>
<dbReference type="InterPro" id="IPR014239">
    <property type="entry name" value="YpeB_PepSY1-2"/>
</dbReference>
<dbReference type="NCBIfam" id="TIGR02889">
    <property type="entry name" value="spore_YpeB"/>
    <property type="match status" value="1"/>
</dbReference>
<dbReference type="Pfam" id="PF03413">
    <property type="entry name" value="PepSY"/>
    <property type="match status" value="1"/>
</dbReference>
<dbReference type="Pfam" id="PF20769">
    <property type="entry name" value="YPEB_N"/>
    <property type="match status" value="1"/>
</dbReference>
<dbReference type="Pfam" id="PF14620">
    <property type="entry name" value="YPEB_PepSY1-2"/>
    <property type="match status" value="1"/>
</dbReference>
<gene>
    <name type="primary">ypeB</name>
    <name type="synonym">joeB</name>
    <name type="synonym">yzuA</name>
    <name type="ordered locus">BSU22920</name>
</gene>
<keyword id="KW-0309">Germination</keyword>
<keyword id="KW-1185">Reference proteome</keyword>
<keyword id="KW-0749">Sporulation</keyword>
<feature type="chain" id="PRO_0000066395" description="Sporulation protein YpeB">
    <location>
        <begin position="1"/>
        <end position="450"/>
    </location>
</feature>
<organism>
    <name type="scientific">Bacillus subtilis (strain 168)</name>
    <dbReference type="NCBI Taxonomy" id="224308"/>
    <lineage>
        <taxon>Bacteria</taxon>
        <taxon>Bacillati</taxon>
        <taxon>Bacillota</taxon>
        <taxon>Bacilli</taxon>
        <taxon>Bacillales</taxon>
        <taxon>Bacillaceae</taxon>
        <taxon>Bacillus</taxon>
    </lineage>
</organism>
<accession>P38490</accession>
<accession>P40774</accession>
<sequence>MIRGILIAVLGIAIVGTGYWGYKEHQEKDAVLLHAENNYQRAFHELTYQVDQLHDKIGTTLAMNSQKSLSPALIDVWRITSEAHNSVSQLPLTLMPFNKTEELLSKIGDFSYKTSVRDLDQKPLDKNEYTSLNKLYQQSEDIQNELRHVQHLVMSKNLRWMDVEMALASDEKQSDNTIINSFKTVEKNVGAFSTGTDLGPSFTSTKKEEKGFSHLKGKQISEQEAKQIAERFAPDDNYSIKVVKSGKKTNRDVYSISMKDPDHKAVIYMDITKKGGHPVYLIQNREVKDQKISLNDGSNRALAFLKKNGFETDDLEIDESAQYDKIGVFSYVPVENKVRMYPEAIRMKVALDDGEVVGFSARDFLTSHRKRTIPKPAITEAEAKSKLNKNVQVRETRLALITNELGQEVLCYEMLGTIENDTFRMYINAKDGSEEKVEKLKNAEPIYKDL</sequence>
<comment type="function">
    <text>Required for spore cortex hydrolysis during germination. Appears to be required for either expression, localization, activation or function of SleB.</text>
</comment>
<comment type="developmental stage">
    <text>Expressed in the forespore during sporulation.</text>
</comment>
<comment type="induction">
    <text>Expression is sigma G-dependent.</text>
</comment>
<comment type="similarity">
    <text evidence="1">Belongs to the YpeB family.</text>
</comment>
<comment type="sequence caution" evidence="1">
    <conflict type="frameshift">
        <sequence resource="EMBL-CDS" id="AAA22820"/>
    </conflict>
</comment>
<proteinExistence type="evidence at protein level"/>
<name>YPEB_BACSU</name>
<reference key="1">
    <citation type="journal article" date="1996" name="Microbiology">
        <title>Sequence analysis of the Bacillus subtilis chromosome region between the serA and kdg loci cloned in a yeast artificial chromosome.</title>
        <authorList>
            <person name="Sorokin A.V."/>
            <person name="Azevedo V."/>
            <person name="Zumstein E."/>
            <person name="Galleron N."/>
            <person name="Ehrlich S.D."/>
            <person name="Serror P."/>
        </authorList>
    </citation>
    <scope>NUCLEOTIDE SEQUENCE [GENOMIC DNA]</scope>
    <source>
        <strain>168 / Marburg / ATCC 6051 / DSM 10 / JCM 1465 / NBRC 13719 / NCIMB 3610 / NRRL NRS-744 / VKM B-501</strain>
    </source>
</reference>
<reference key="2">
    <citation type="journal article" date="1997" name="Nature">
        <title>The complete genome sequence of the Gram-positive bacterium Bacillus subtilis.</title>
        <authorList>
            <person name="Kunst F."/>
            <person name="Ogasawara N."/>
            <person name="Moszer I."/>
            <person name="Albertini A.M."/>
            <person name="Alloni G."/>
            <person name="Azevedo V."/>
            <person name="Bertero M.G."/>
            <person name="Bessieres P."/>
            <person name="Bolotin A."/>
            <person name="Borchert S."/>
            <person name="Borriss R."/>
            <person name="Boursier L."/>
            <person name="Brans A."/>
            <person name="Braun M."/>
            <person name="Brignell S.C."/>
            <person name="Bron S."/>
            <person name="Brouillet S."/>
            <person name="Bruschi C.V."/>
            <person name="Caldwell B."/>
            <person name="Capuano V."/>
            <person name="Carter N.M."/>
            <person name="Choi S.-K."/>
            <person name="Codani J.-J."/>
            <person name="Connerton I.F."/>
            <person name="Cummings N.J."/>
            <person name="Daniel R.A."/>
            <person name="Denizot F."/>
            <person name="Devine K.M."/>
            <person name="Duesterhoeft A."/>
            <person name="Ehrlich S.D."/>
            <person name="Emmerson P.T."/>
            <person name="Entian K.-D."/>
            <person name="Errington J."/>
            <person name="Fabret C."/>
            <person name="Ferrari E."/>
            <person name="Foulger D."/>
            <person name="Fritz C."/>
            <person name="Fujita M."/>
            <person name="Fujita Y."/>
            <person name="Fuma S."/>
            <person name="Galizzi A."/>
            <person name="Galleron N."/>
            <person name="Ghim S.-Y."/>
            <person name="Glaser P."/>
            <person name="Goffeau A."/>
            <person name="Golightly E.J."/>
            <person name="Grandi G."/>
            <person name="Guiseppi G."/>
            <person name="Guy B.J."/>
            <person name="Haga K."/>
            <person name="Haiech J."/>
            <person name="Harwood C.R."/>
            <person name="Henaut A."/>
            <person name="Hilbert H."/>
            <person name="Holsappel S."/>
            <person name="Hosono S."/>
            <person name="Hullo M.-F."/>
            <person name="Itaya M."/>
            <person name="Jones L.-M."/>
            <person name="Joris B."/>
            <person name="Karamata D."/>
            <person name="Kasahara Y."/>
            <person name="Klaerr-Blanchard M."/>
            <person name="Klein C."/>
            <person name="Kobayashi Y."/>
            <person name="Koetter P."/>
            <person name="Koningstein G."/>
            <person name="Krogh S."/>
            <person name="Kumano M."/>
            <person name="Kurita K."/>
            <person name="Lapidus A."/>
            <person name="Lardinois S."/>
            <person name="Lauber J."/>
            <person name="Lazarevic V."/>
            <person name="Lee S.-M."/>
            <person name="Levine A."/>
            <person name="Liu H."/>
            <person name="Masuda S."/>
            <person name="Mauel C."/>
            <person name="Medigue C."/>
            <person name="Medina N."/>
            <person name="Mellado R.P."/>
            <person name="Mizuno M."/>
            <person name="Moestl D."/>
            <person name="Nakai S."/>
            <person name="Noback M."/>
            <person name="Noone D."/>
            <person name="O'Reilly M."/>
            <person name="Ogawa K."/>
            <person name="Ogiwara A."/>
            <person name="Oudega B."/>
            <person name="Park S.-H."/>
            <person name="Parro V."/>
            <person name="Pohl T.M."/>
            <person name="Portetelle D."/>
            <person name="Porwollik S."/>
            <person name="Prescott A.M."/>
            <person name="Presecan E."/>
            <person name="Pujic P."/>
            <person name="Purnelle B."/>
            <person name="Rapoport G."/>
            <person name="Rey M."/>
            <person name="Reynolds S."/>
            <person name="Rieger M."/>
            <person name="Rivolta C."/>
            <person name="Rocha E."/>
            <person name="Roche B."/>
            <person name="Rose M."/>
            <person name="Sadaie Y."/>
            <person name="Sato T."/>
            <person name="Scanlan E."/>
            <person name="Schleich S."/>
            <person name="Schroeter R."/>
            <person name="Scoffone F."/>
            <person name="Sekiguchi J."/>
            <person name="Sekowska A."/>
            <person name="Seror S.J."/>
            <person name="Serror P."/>
            <person name="Shin B.-S."/>
            <person name="Soldo B."/>
            <person name="Sorokin A."/>
            <person name="Tacconi E."/>
            <person name="Takagi T."/>
            <person name="Takahashi H."/>
            <person name="Takemaru K."/>
            <person name="Takeuchi M."/>
            <person name="Tamakoshi A."/>
            <person name="Tanaka T."/>
            <person name="Terpstra P."/>
            <person name="Tognoni A."/>
            <person name="Tosato V."/>
            <person name="Uchiyama S."/>
            <person name="Vandenbol M."/>
            <person name="Vannier F."/>
            <person name="Vassarotti A."/>
            <person name="Viari A."/>
            <person name="Wambutt R."/>
            <person name="Wedler E."/>
            <person name="Wedler H."/>
            <person name="Weitzenegger T."/>
            <person name="Winters P."/>
            <person name="Wipat A."/>
            <person name="Yamamoto H."/>
            <person name="Yamane K."/>
            <person name="Yasumoto K."/>
            <person name="Yata K."/>
            <person name="Yoshida K."/>
            <person name="Yoshikawa H.-F."/>
            <person name="Zumstein E."/>
            <person name="Yoshikawa H."/>
            <person name="Danchin A."/>
        </authorList>
    </citation>
    <scope>NUCLEOTIDE SEQUENCE [LARGE SCALE GENOMIC DNA]</scope>
    <source>
        <strain>168</strain>
    </source>
</reference>
<reference key="3">
    <citation type="journal article" date="1996" name="J. Bacteriol.">
        <title>A gene (sleB) encoding a spore cortex-lytic enzyme from Bacillus subtilis and response of the enzyme to L-alanine-mediated germination.</title>
        <authorList>
            <person name="Moriyama R."/>
            <person name="Hattori A."/>
            <person name="Miyata S."/>
            <person name="Kudoh S."/>
            <person name="Makino S."/>
        </authorList>
    </citation>
    <scope>NUCLEOTIDE SEQUENCE [GENOMIC DNA] OF 1-331</scope>
    <source>
        <strain>168</strain>
    </source>
</reference>
<reference key="4">
    <citation type="submission" date="1994-06" db="EMBL/GenBank/DDBJ databases">
        <authorList>
            <person name="Sorokin A.V."/>
            <person name="Azevedo V."/>
            <person name="Zumstein E."/>
            <person name="Galleron N."/>
            <person name="Ehrlich S.D."/>
            <person name="Serror P."/>
        </authorList>
    </citation>
    <scope>NUCLEOTIDE SEQUENCE [GENOMIC DNA] OF 220-450</scope>
    <source>
        <strain>168 / Marburg / ATCC 6051 / DSM 10 / JCM 1465 / NBRC 13719 / NCIMB 3610 / NRRL NRS-744 / VKM B-501</strain>
    </source>
</reference>
<reference key="5">
    <citation type="journal article" date="1988" name="Gene">
        <title>Characterization of signal-sequence-coding regions selected from the Bacillus subtilis chromosome.</title>
        <authorList>
            <person name="Smith H."/>
            <person name="de Jong A."/>
            <person name="Bron S."/>
            <person name="Venema G."/>
        </authorList>
    </citation>
    <scope>NUCLEOTIDE SEQUENCE [GENOMIC DNA] OF 1-27</scope>
</reference>
<reference key="6">
    <citation type="journal article" date="2000" name="Microbiology">
        <title>Complete spore-cortex hydrolysis during germination of Bacillus subtilis 168 requires SleB and YpeB.</title>
        <authorList>
            <person name="Boland F.M."/>
            <person name="Atrih A."/>
            <person name="Chirakkal H."/>
            <person name="Foster S.J."/>
            <person name="Moir A."/>
        </authorList>
    </citation>
    <scope>CHARACTERIZATION</scope>
    <source>
        <strain>168</strain>
    </source>
</reference>
<reference key="7">
    <citation type="journal article" date="2002" name="Microbiology">
        <title>Analysis of spore cortex lytic enzymes and related proteins in Bacillus subtilis endospore germination.</title>
        <authorList>
            <person name="Chirakkal H."/>
            <person name="O'Rourke M."/>
            <person name="Atrih A."/>
            <person name="Foster S.J."/>
            <person name="Moir A."/>
        </authorList>
    </citation>
    <scope>CHARACTERIZATION</scope>
    <source>
        <strain>168</strain>
    </source>
</reference>
<protein>
    <recommendedName>
        <fullName>Sporulation protein YpeB</fullName>
    </recommendedName>
    <alternativeName>
        <fullName>PSPA12</fullName>
    </alternativeName>
</protein>